<sequence>MIPSKYKLAPPDDLHPYSESERAKHKIYPDFDPWKHTKEEDEILLNFVSKGYYSTSKVNFESISARSSLQDSLPKLSSTLSEKFSEVVRIREREINTIKGNSKDGMAASKFTDLCGPDFKLPSRLTLTDHRKELWLQELSSPYTPLHKITSFIPHGLKRRQVLEQCYIKQIPLKRAVWLIKCCYSIEWKTGIAKYANSPQEKDKFNAHLLKEWTDNFVHILEKLIFEMTQHYNDSVKLEAWKTEVSYFLKLVGNCYTLELIDKNTFHFWILQFVSKVENFEYLPLPLHILELFWSGICNTNSTKVNESESNPLYMVTKLTDILLNQYYIILHSKSMINDDKYIINDIKKNNSIKESLLASIQKLICILFKQQSLEVFLFPPTSWEKYKPCLIQITSALYRKSDEVAEIKRKLELISYRNETLKYTPPISENKVKDDLILTTFTENSGSITVVELSQVDTGLTGALDDNATDFDWTSYSDQEISTKIQIIQIILWAIHPSRHSHYEAGQLAAKLLLLKINTMDGFPEYEIEDEIWSLVFKLAKLSDKSKALPAVLEALYSLLNTLIVYGLIKVSTYIRKLISSGILYLTESNDKYIHCRLLINLKMSPLMKSQYNMVLKNVMDQDPEYYNNYNFDQIVSIVEDLKVKLPNGDAIEYSNYPMSVKISLGEWYLTYLCNGKLVNETRESLTEKYVLFAHQLNTNHLYFKWIEFIVYHQLIEDIETLEYLMEVLLRYKKLFSQYINDHVLFIKTFIFIIRRILKERDSIAYSLTSFMDFWKFIMKSYSLEIRADTDLRSEMSAVYEEEKAKKEITEGEKDSWMGLYQNIHPDSTSLDQNHTGFSELFLTNLKTFLSSKQDKQAKKKARYNLLLLMQAKNRDYSKFISIYLKRKDFKTSDLVNLLSSKLLTLDQIKNTYGLKYVLELFDIESESNCVFYEYQKRCYIELNYKSVLSEYNVVSHHEMNRFIFKIVNHSTSAKLKETASALLTKNLEANKDKAIQLFYQLVYYQNNLEFLSSEELQEFAVNNSPQKLYSYLDFTNLWLFQSFTKFYIHETFQNTNEDKVKVGDVIFSIIETTKYNVLCAKIFEDIRDHRVTDLVIELFEQDFFKKIISGEEFKAEFLQMLIEIINHLSMHKGKTNDRSGEQSHTSYELCVQVMAHFQQLSDSELSAKEIELDVFMKIFTVHQNSVFQEILRDTESSSAMIESLFALFERVNFSLRLKLMFYEVLSSLKSYCTYEAGISDEQSRTKLMHKLMCLPPFQVSSFFPEEDDTDCTRDPALSLGLDLGTASANSTSSTTPSEGTHKKRCAIWDKRLHKYTGELQRKPYYCIKNYQDTEDINNCSLNLSLFDARYERNNPR</sequence>
<reference key="1">
    <citation type="journal article" date="2004" name="Nature">
        <title>Genome evolution in yeasts.</title>
        <authorList>
            <person name="Dujon B."/>
            <person name="Sherman D."/>
            <person name="Fischer G."/>
            <person name="Durrens P."/>
            <person name="Casaregola S."/>
            <person name="Lafontaine I."/>
            <person name="de Montigny J."/>
            <person name="Marck C."/>
            <person name="Neuveglise C."/>
            <person name="Talla E."/>
            <person name="Goffard N."/>
            <person name="Frangeul L."/>
            <person name="Aigle M."/>
            <person name="Anthouard V."/>
            <person name="Babour A."/>
            <person name="Barbe V."/>
            <person name="Barnay S."/>
            <person name="Blanchin S."/>
            <person name="Beckerich J.-M."/>
            <person name="Beyne E."/>
            <person name="Bleykasten C."/>
            <person name="Boisrame A."/>
            <person name="Boyer J."/>
            <person name="Cattolico L."/>
            <person name="Confanioleri F."/>
            <person name="de Daruvar A."/>
            <person name="Despons L."/>
            <person name="Fabre E."/>
            <person name="Fairhead C."/>
            <person name="Ferry-Dumazet H."/>
            <person name="Groppi A."/>
            <person name="Hantraye F."/>
            <person name="Hennequin C."/>
            <person name="Jauniaux N."/>
            <person name="Joyet P."/>
            <person name="Kachouri R."/>
            <person name="Kerrest A."/>
            <person name="Koszul R."/>
            <person name="Lemaire M."/>
            <person name="Lesur I."/>
            <person name="Ma L."/>
            <person name="Muller H."/>
            <person name="Nicaud J.-M."/>
            <person name="Nikolski M."/>
            <person name="Oztas S."/>
            <person name="Ozier-Kalogeropoulos O."/>
            <person name="Pellenz S."/>
            <person name="Potier S."/>
            <person name="Richard G.-F."/>
            <person name="Straub M.-L."/>
            <person name="Suleau A."/>
            <person name="Swennen D."/>
            <person name="Tekaia F."/>
            <person name="Wesolowski-Louvel M."/>
            <person name="Westhof E."/>
            <person name="Wirth B."/>
            <person name="Zeniou-Meyer M."/>
            <person name="Zivanovic Y."/>
            <person name="Bolotin-Fukuhara M."/>
            <person name="Thierry A."/>
            <person name="Bouchier C."/>
            <person name="Caudron B."/>
            <person name="Scarpelli C."/>
            <person name="Gaillardin C."/>
            <person name="Weissenbach J."/>
            <person name="Wincker P."/>
            <person name="Souciet J.-L."/>
        </authorList>
    </citation>
    <scope>NUCLEOTIDE SEQUENCE [LARGE SCALE GENOMIC DNA]</scope>
    <source>
        <strain>ATCC 2001 / BCRC 20586 / JCM 3761 / NBRC 0622 / NRRL Y-65 / CBS 138</strain>
    </source>
</reference>
<comment type="function">
    <text evidence="1">Component of the SRB8-11 complex. The SRB8-11 complex is a regulatory module of the Mediator complex which is itself involved in regulation of basal and activated RNA polymerase II-dependent transcription. The SRB8-11 complex may be involved in the transcriptional repression of a subset of genes regulated by Mediator. It may inhibit the association of the Mediator complex with RNA polymerase II to form the holoenzyme complex (By similarity).</text>
</comment>
<comment type="subunit">
    <text evidence="1">Component of the SRB8-11 complex, which itself associates with the Mediator complex.</text>
</comment>
<comment type="subcellular location">
    <subcellularLocation>
        <location evidence="2">Nucleus</location>
    </subcellularLocation>
</comment>
<comment type="similarity">
    <text evidence="2">Belongs to the Mediator complex subunit 12 family.</text>
</comment>
<protein>
    <recommendedName>
        <fullName>Mediator of RNA polymerase II transcription subunit 12</fullName>
    </recommendedName>
    <alternativeName>
        <fullName>Mediator complex subunit 12</fullName>
    </alternativeName>
</protein>
<feature type="chain" id="PRO_0000312969" description="Mediator of RNA polymerase II transcription subunit 12">
    <location>
        <begin position="1"/>
        <end position="1358"/>
    </location>
</feature>
<evidence type="ECO:0000250" key="1"/>
<evidence type="ECO:0000305" key="2"/>
<proteinExistence type="inferred from homology"/>
<gene>
    <name type="primary">SRB8</name>
    <name type="synonym">MED12</name>
    <name type="ordered locus">CAGL0E00627g</name>
</gene>
<organism>
    <name type="scientific">Candida glabrata (strain ATCC 2001 / BCRC 20586 / JCM 3761 / NBRC 0622 / NRRL Y-65 / CBS 138)</name>
    <name type="common">Yeast</name>
    <name type="synonym">Nakaseomyces glabratus</name>
    <dbReference type="NCBI Taxonomy" id="284593"/>
    <lineage>
        <taxon>Eukaryota</taxon>
        <taxon>Fungi</taxon>
        <taxon>Dikarya</taxon>
        <taxon>Ascomycota</taxon>
        <taxon>Saccharomycotina</taxon>
        <taxon>Saccharomycetes</taxon>
        <taxon>Saccharomycetales</taxon>
        <taxon>Saccharomycetaceae</taxon>
        <taxon>Nakaseomyces</taxon>
    </lineage>
</organism>
<accession>Q6FVM9</accession>
<name>SRB8_CANGA</name>
<dbReference type="EMBL" id="CR380951">
    <property type="protein sequence ID" value="CAG58634.1"/>
    <property type="molecule type" value="Genomic_DNA"/>
</dbReference>
<dbReference type="RefSeq" id="XP_445715.1">
    <property type="nucleotide sequence ID" value="XM_445715.1"/>
</dbReference>
<dbReference type="SMR" id="Q6FVM9"/>
<dbReference type="FunCoup" id="Q6FVM9">
    <property type="interactions" value="166"/>
</dbReference>
<dbReference type="STRING" id="284593.Q6FVM9"/>
<dbReference type="EnsemblFungi" id="CAGL0E00627g-T">
    <property type="protein sequence ID" value="CAGL0E00627g-T-p1"/>
    <property type="gene ID" value="CAGL0E00627g"/>
</dbReference>
<dbReference type="GeneID" id="2887477"/>
<dbReference type="KEGG" id="cgr:2887477"/>
<dbReference type="CGD" id="CAL0129076">
    <property type="gene designation" value="SRB8"/>
</dbReference>
<dbReference type="VEuPathDB" id="FungiDB:CAGL0E00627g"/>
<dbReference type="eggNOG" id="KOG4522">
    <property type="taxonomic scope" value="Eukaryota"/>
</dbReference>
<dbReference type="HOGENOM" id="CLU_256280_0_0_1"/>
<dbReference type="InParanoid" id="Q6FVM9"/>
<dbReference type="OMA" id="EFIVYHQ"/>
<dbReference type="Proteomes" id="UP000002428">
    <property type="component" value="Chromosome E"/>
</dbReference>
<dbReference type="GO" id="GO:1990508">
    <property type="term" value="C:CKM complex"/>
    <property type="evidence" value="ECO:0007669"/>
    <property type="project" value="EnsemblFungi"/>
</dbReference>
<dbReference type="GO" id="GO:0016592">
    <property type="term" value="C:mediator complex"/>
    <property type="evidence" value="ECO:0007669"/>
    <property type="project" value="EnsemblFungi"/>
</dbReference>
<dbReference type="GO" id="GO:0003713">
    <property type="term" value="F:transcription coactivator activity"/>
    <property type="evidence" value="ECO:0007669"/>
    <property type="project" value="EnsemblFungi"/>
</dbReference>
<dbReference type="GO" id="GO:0000122">
    <property type="term" value="P:negative regulation of transcription by RNA polymerase II"/>
    <property type="evidence" value="ECO:0007669"/>
    <property type="project" value="EnsemblFungi"/>
</dbReference>
<dbReference type="GO" id="GO:0000411">
    <property type="term" value="P:positive regulation of transcription by galactose"/>
    <property type="evidence" value="ECO:0007669"/>
    <property type="project" value="EnsemblFungi"/>
</dbReference>
<dbReference type="GO" id="GO:0045944">
    <property type="term" value="P:positive regulation of transcription by RNA polymerase II"/>
    <property type="evidence" value="ECO:0007669"/>
    <property type="project" value="EnsemblFungi"/>
</dbReference>
<dbReference type="InterPro" id="IPR019035">
    <property type="entry name" value="Mediator_Med12"/>
</dbReference>
<dbReference type="PANTHER" id="PTHR46567">
    <property type="entry name" value="MEDIATOR OF RNA POLYMERASE II TRANSCRIPTION SUBUNIT 12"/>
    <property type="match status" value="1"/>
</dbReference>
<dbReference type="PANTHER" id="PTHR46567:SF1">
    <property type="entry name" value="MEDIATOR OF RNA POLYMERASE II TRANSCRIPTION SUBUNIT 12"/>
    <property type="match status" value="1"/>
</dbReference>
<dbReference type="Pfam" id="PF09497">
    <property type="entry name" value="Med12"/>
    <property type="match status" value="1"/>
</dbReference>
<dbReference type="SMART" id="SM01281">
    <property type="entry name" value="Med12"/>
    <property type="match status" value="1"/>
</dbReference>
<keyword id="KW-0010">Activator</keyword>
<keyword id="KW-0539">Nucleus</keyword>
<keyword id="KW-1185">Reference proteome</keyword>
<keyword id="KW-0678">Repressor</keyword>
<keyword id="KW-0804">Transcription</keyword>
<keyword id="KW-0805">Transcription regulation</keyword>